<comment type="function">
    <text evidence="1">Catalyzes the dephosphorylation of undecaprenyl diphosphate (UPP). Confers resistance to bacitracin.</text>
</comment>
<comment type="catalytic activity">
    <reaction evidence="1">
        <text>di-trans,octa-cis-undecaprenyl diphosphate + H2O = di-trans,octa-cis-undecaprenyl phosphate + phosphate + H(+)</text>
        <dbReference type="Rhea" id="RHEA:28094"/>
        <dbReference type="ChEBI" id="CHEBI:15377"/>
        <dbReference type="ChEBI" id="CHEBI:15378"/>
        <dbReference type="ChEBI" id="CHEBI:43474"/>
        <dbReference type="ChEBI" id="CHEBI:58405"/>
        <dbReference type="ChEBI" id="CHEBI:60392"/>
        <dbReference type="EC" id="3.6.1.27"/>
    </reaction>
</comment>
<comment type="subcellular location">
    <subcellularLocation>
        <location evidence="1">Cell membrane</location>
        <topology evidence="1">Multi-pass membrane protein</topology>
    </subcellularLocation>
</comment>
<comment type="miscellaneous">
    <text>Bacitracin is thought to be involved in the inhibition of peptidoglycan synthesis by sequestering undecaprenyl diphosphate, thereby reducing the pool of lipid carrier available.</text>
</comment>
<comment type="similarity">
    <text evidence="1">Belongs to the UppP family.</text>
</comment>
<feature type="chain" id="PRO_0000151239" description="Undecaprenyl-diphosphatase">
    <location>
        <begin position="1"/>
        <end position="267"/>
    </location>
</feature>
<feature type="transmembrane region" description="Helical" evidence="1">
    <location>
        <begin position="4"/>
        <end position="24"/>
    </location>
</feature>
<feature type="transmembrane region" description="Helical" evidence="1">
    <location>
        <begin position="41"/>
        <end position="61"/>
    </location>
</feature>
<feature type="transmembrane region" description="Helical" evidence="1">
    <location>
        <begin position="84"/>
        <end position="104"/>
    </location>
</feature>
<feature type="transmembrane region" description="Helical" evidence="1">
    <location>
        <begin position="116"/>
        <end position="136"/>
    </location>
</feature>
<feature type="transmembrane region" description="Helical" evidence="1">
    <location>
        <begin position="160"/>
        <end position="180"/>
    </location>
</feature>
<feature type="transmembrane region" description="Helical" evidence="1">
    <location>
        <begin position="185"/>
        <end position="205"/>
    </location>
</feature>
<feature type="transmembrane region" description="Helical" evidence="1">
    <location>
        <begin position="216"/>
        <end position="236"/>
    </location>
</feature>
<feature type="transmembrane region" description="Helical" evidence="1">
    <location>
        <begin position="246"/>
        <end position="266"/>
    </location>
</feature>
<dbReference type="EC" id="3.6.1.27" evidence="1"/>
<dbReference type="EMBL" id="BA000021">
    <property type="protein sequence ID" value="BAC24619.1"/>
    <property type="molecule type" value="Genomic_DNA"/>
</dbReference>
<dbReference type="SMR" id="Q8D281"/>
<dbReference type="STRING" id="36870.gene:10368977"/>
<dbReference type="KEGG" id="wbr:bacA"/>
<dbReference type="eggNOG" id="COG1968">
    <property type="taxonomic scope" value="Bacteria"/>
</dbReference>
<dbReference type="HOGENOM" id="CLU_060296_2_0_6"/>
<dbReference type="OrthoDB" id="9808289at2"/>
<dbReference type="Proteomes" id="UP000000562">
    <property type="component" value="Chromosome"/>
</dbReference>
<dbReference type="GO" id="GO:0005886">
    <property type="term" value="C:plasma membrane"/>
    <property type="evidence" value="ECO:0007669"/>
    <property type="project" value="UniProtKB-SubCell"/>
</dbReference>
<dbReference type="GO" id="GO:0050380">
    <property type="term" value="F:undecaprenyl-diphosphatase activity"/>
    <property type="evidence" value="ECO:0007669"/>
    <property type="project" value="UniProtKB-UniRule"/>
</dbReference>
<dbReference type="GO" id="GO:0071555">
    <property type="term" value="P:cell wall organization"/>
    <property type="evidence" value="ECO:0007669"/>
    <property type="project" value="UniProtKB-KW"/>
</dbReference>
<dbReference type="GO" id="GO:0009252">
    <property type="term" value="P:peptidoglycan biosynthetic process"/>
    <property type="evidence" value="ECO:0007669"/>
    <property type="project" value="UniProtKB-KW"/>
</dbReference>
<dbReference type="GO" id="GO:0008360">
    <property type="term" value="P:regulation of cell shape"/>
    <property type="evidence" value="ECO:0007669"/>
    <property type="project" value="UniProtKB-KW"/>
</dbReference>
<dbReference type="GO" id="GO:0046677">
    <property type="term" value="P:response to antibiotic"/>
    <property type="evidence" value="ECO:0007669"/>
    <property type="project" value="UniProtKB-UniRule"/>
</dbReference>
<dbReference type="HAMAP" id="MF_01006">
    <property type="entry name" value="Undec_diphosphatase"/>
    <property type="match status" value="1"/>
</dbReference>
<dbReference type="InterPro" id="IPR003824">
    <property type="entry name" value="UppP"/>
</dbReference>
<dbReference type="PANTHER" id="PTHR30622">
    <property type="entry name" value="UNDECAPRENYL-DIPHOSPHATASE"/>
    <property type="match status" value="1"/>
</dbReference>
<dbReference type="PANTHER" id="PTHR30622:SF3">
    <property type="entry name" value="UNDECAPRENYL-DIPHOSPHATASE"/>
    <property type="match status" value="1"/>
</dbReference>
<dbReference type="Pfam" id="PF02673">
    <property type="entry name" value="BacA"/>
    <property type="match status" value="1"/>
</dbReference>
<accession>Q8D281</accession>
<evidence type="ECO:0000255" key="1">
    <source>
        <dbReference type="HAMAP-Rule" id="MF_01006"/>
    </source>
</evidence>
<proteinExistence type="inferred from homology"/>
<name>UPPP_WIGBR</name>
<reference key="1">
    <citation type="journal article" date="2002" name="Nat. Genet.">
        <title>Genome sequence of the endocellular obligate symbiont of tsetse flies, Wigglesworthia glossinidia.</title>
        <authorList>
            <person name="Akman L."/>
            <person name="Yamashita A."/>
            <person name="Watanabe H."/>
            <person name="Oshima K."/>
            <person name="Shiba T."/>
            <person name="Hattori M."/>
            <person name="Aksoy S."/>
        </authorList>
    </citation>
    <scope>NUCLEOTIDE SEQUENCE [LARGE SCALE GENOMIC DNA]</scope>
</reference>
<organism>
    <name type="scientific">Wigglesworthia glossinidia brevipalpis</name>
    <dbReference type="NCBI Taxonomy" id="36870"/>
    <lineage>
        <taxon>Bacteria</taxon>
        <taxon>Pseudomonadati</taxon>
        <taxon>Pseudomonadota</taxon>
        <taxon>Gammaproteobacteria</taxon>
        <taxon>Enterobacterales</taxon>
        <taxon>Erwiniaceae</taxon>
        <taxon>Wigglesworthia</taxon>
    </lineage>
</organism>
<sequence length="267" mass="30959">MKEILIIIILGIVEGITEFFPISSNGHLILINYIFNIDKENIQNIIKIIQIGPIFSIILLFKEKIKKSITFFYFNINNIKKKLILILFNLVLSCIPISILGFMFYKKLEEFYSPKYISYFLILGSIFFILSEFISLKKIKIDNFKKISFLKYFIIGSSQCFSLLPGVSRLGITISIGLILNIDRYVLFKFSMILFSSIMPAVLILEVYKNFFYLKENIFFVIIGVMSSFLTSLIFGRTAIKIMKNTSLIIFAIYRIFIACIILFTCN</sequence>
<gene>
    <name evidence="1" type="primary">uppP</name>
    <name type="synonym">bacA</name>
    <name type="synonym">upk</name>
    <name type="ordered locus">WIGBR4730</name>
</gene>
<protein>
    <recommendedName>
        <fullName evidence="1">Undecaprenyl-diphosphatase</fullName>
        <ecNumber evidence="1">3.6.1.27</ecNumber>
    </recommendedName>
    <alternativeName>
        <fullName evidence="1">Bacitracin resistance protein</fullName>
    </alternativeName>
    <alternativeName>
        <fullName evidence="1">Undecaprenyl pyrophosphate phosphatase</fullName>
    </alternativeName>
</protein>
<keyword id="KW-0046">Antibiotic resistance</keyword>
<keyword id="KW-1003">Cell membrane</keyword>
<keyword id="KW-0133">Cell shape</keyword>
<keyword id="KW-0961">Cell wall biogenesis/degradation</keyword>
<keyword id="KW-0378">Hydrolase</keyword>
<keyword id="KW-0472">Membrane</keyword>
<keyword id="KW-0573">Peptidoglycan synthesis</keyword>
<keyword id="KW-1185">Reference proteome</keyword>
<keyword id="KW-0812">Transmembrane</keyword>
<keyword id="KW-1133">Transmembrane helix</keyword>